<reference key="1">
    <citation type="journal article" date="1998" name="Nature">
        <title>Deciphering the biology of Mycobacterium tuberculosis from the complete genome sequence.</title>
        <authorList>
            <person name="Cole S.T."/>
            <person name="Brosch R."/>
            <person name="Parkhill J."/>
            <person name="Garnier T."/>
            <person name="Churcher C.M."/>
            <person name="Harris D.E."/>
            <person name="Gordon S.V."/>
            <person name="Eiglmeier K."/>
            <person name="Gas S."/>
            <person name="Barry C.E. III"/>
            <person name="Tekaia F."/>
            <person name="Badcock K."/>
            <person name="Basham D."/>
            <person name="Brown D."/>
            <person name="Chillingworth T."/>
            <person name="Connor R."/>
            <person name="Davies R.M."/>
            <person name="Devlin K."/>
            <person name="Feltwell T."/>
            <person name="Gentles S."/>
            <person name="Hamlin N."/>
            <person name="Holroyd S."/>
            <person name="Hornsby T."/>
            <person name="Jagels K."/>
            <person name="Krogh A."/>
            <person name="McLean J."/>
            <person name="Moule S."/>
            <person name="Murphy L.D."/>
            <person name="Oliver S."/>
            <person name="Osborne J."/>
            <person name="Quail M.A."/>
            <person name="Rajandream M.A."/>
            <person name="Rogers J."/>
            <person name="Rutter S."/>
            <person name="Seeger K."/>
            <person name="Skelton S."/>
            <person name="Squares S."/>
            <person name="Squares R."/>
            <person name="Sulston J.E."/>
            <person name="Taylor K."/>
            <person name="Whitehead S."/>
            <person name="Barrell B.G."/>
        </authorList>
    </citation>
    <scope>NUCLEOTIDE SEQUENCE [LARGE SCALE GENOMIC DNA]</scope>
    <source>
        <strain>ATCC 25618 / H37Rv</strain>
    </source>
</reference>
<reference key="2">
    <citation type="journal article" date="2007" name="Biochim. Biophys. Acta">
        <title>Rv3389C from Mycobacterium tuberculosis, a member of the (R)-specific hydratase/dehydratase family.</title>
        <authorList>
            <person name="Sacco E."/>
            <person name="Legendre V."/>
            <person name="Laval F."/>
            <person name="Zerbib D."/>
            <person name="Montrozier H."/>
            <person name="Eynard N."/>
            <person name="Guilhot C."/>
            <person name="Daffe M."/>
            <person name="Quemard A."/>
        </authorList>
    </citation>
    <scope>FUNCTION</scope>
    <scope>CATALYTIC ACTIVITY</scope>
    <scope>BIOPHYSICOCHEMICAL PROPERTIES</scope>
    <source>
        <strain>H37Rv</strain>
    </source>
</reference>
<reference key="3">
    <citation type="journal article" date="2009" name="J. Bacteriol.">
        <title>Heterologous expression of mycobacterial proteins in Saccharomyces cerevisiae reveals two physiologically functional 3-hydroxyacyl-thioester dehydratases, HtdX and HtdY, in addition to HadABC and HtdZ.</title>
        <authorList>
            <person name="Gurvitz A."/>
            <person name="Hiltunen J.K."/>
            <person name="Kastaniotis A.J."/>
        </authorList>
    </citation>
    <scope>FUNCTION</scope>
    <scope>CATALYTIC ACTIVITY</scope>
</reference>
<reference key="4">
    <citation type="journal article" date="2011" name="Mol. Cell. Proteomics">
        <title>Proteogenomic analysis of Mycobacterium tuberculosis by high resolution mass spectrometry.</title>
        <authorList>
            <person name="Kelkar D.S."/>
            <person name="Kumar D."/>
            <person name="Kumar P."/>
            <person name="Balakrishnan L."/>
            <person name="Muthusamy B."/>
            <person name="Yadav A.K."/>
            <person name="Shrivastava P."/>
            <person name="Marimuthu A."/>
            <person name="Anand S."/>
            <person name="Sundaram H."/>
            <person name="Kingsbury R."/>
            <person name="Harsha H.C."/>
            <person name="Nair B."/>
            <person name="Prasad T.S."/>
            <person name="Chauhan D.S."/>
            <person name="Katoch K."/>
            <person name="Katoch V.M."/>
            <person name="Kumar P."/>
            <person name="Chaerkady R."/>
            <person name="Ramachandran S."/>
            <person name="Dash D."/>
            <person name="Pandey A."/>
        </authorList>
    </citation>
    <scope>IDENTIFICATION BY MASS SPECTROMETRY [LARGE SCALE ANALYSIS]</scope>
    <source>
        <strain>ATCC 25618 / H37Rv</strain>
    </source>
</reference>
<reference key="5">
    <citation type="journal article" date="2014" name="Immunol. Lett.">
        <title>Mycobacterial 3-hydroxyacyl-l-thioester dehydratase Y derived from Mycobacterium tuberculosis induces COX-2 expression in mouse macrophages through MAPK-NF-kappaB pathway.</title>
        <authorList>
            <person name="Zhao J.W."/>
            <person name="Sun Z.Q."/>
            <person name="Zhang X.Y."/>
            <person name="Zhang Y."/>
            <person name="Liu J."/>
            <person name="Ye J."/>
            <person name="Chen C.C."/>
            <person name="Samten B."/>
            <person name="Wang H.H."/>
            <person name="Guo X.K."/>
            <person name="Zhang S.L."/>
        </authorList>
    </citation>
    <scope>FUNCTION IN VIRULENCE</scope>
</reference>
<reference evidence="9" key="6">
    <citation type="journal article" date="2015" name="Tuberculosis">
        <title>Increasing the structural coverage of tuberculosis drug targets.</title>
        <authorList>
            <person name="Baugh L."/>
            <person name="Phan I."/>
            <person name="Begley D.W."/>
            <person name="Clifton M.C."/>
            <person name="Armour B."/>
            <person name="Dranow D.M."/>
            <person name="Taylor B.M."/>
            <person name="Muruthi M.M."/>
            <person name="Abendroth J."/>
            <person name="Fairman J.W."/>
            <person name="Fox D. III"/>
            <person name="Dieterich S.H."/>
            <person name="Staker B.L."/>
            <person name="Gardberg A.S."/>
            <person name="Choi R."/>
            <person name="Hewitt S.N."/>
            <person name="Napuli A.J."/>
            <person name="Myers J."/>
            <person name="Barrett L.K."/>
            <person name="Zhang Y."/>
            <person name="Ferrell M."/>
            <person name="Mundt E."/>
            <person name="Thompkins K."/>
            <person name="Tran N."/>
            <person name="Lyons-Abbott S."/>
            <person name="Abramov A."/>
            <person name="Sekar A."/>
            <person name="Serbzhinskiy D."/>
            <person name="Lorimer D."/>
            <person name="Buchko G.W."/>
            <person name="Stacy R."/>
            <person name="Stewart L.J."/>
            <person name="Edwards T.E."/>
            <person name="Van Voorhis W.C."/>
            <person name="Myler P.J."/>
        </authorList>
    </citation>
    <scope>X-RAY CRYSTALLOGRAPHY (2.30 ANGSTROMS)</scope>
</reference>
<evidence type="ECO:0000255" key="1"/>
<evidence type="ECO:0000256" key="2">
    <source>
        <dbReference type="SAM" id="MobiDB-lite"/>
    </source>
</evidence>
<evidence type="ECO:0000269" key="3">
    <source>
    </source>
</evidence>
<evidence type="ECO:0000269" key="4">
    <source>
    </source>
</evidence>
<evidence type="ECO:0000269" key="5">
    <source>
    </source>
</evidence>
<evidence type="ECO:0000303" key="6">
    <source>
    </source>
</evidence>
<evidence type="ECO:0000305" key="7"/>
<evidence type="ECO:0000312" key="8">
    <source>
        <dbReference type="EMBL" id="CCP46210.1"/>
    </source>
</evidence>
<evidence type="ECO:0007744" key="9">
    <source>
        <dbReference type="PDB" id="3KHP"/>
    </source>
</evidence>
<evidence type="ECO:0007829" key="10">
    <source>
        <dbReference type="PDB" id="3KHP"/>
    </source>
</evidence>
<keyword id="KW-0002">3D-structure</keyword>
<keyword id="KW-0276">Fatty acid metabolism</keyword>
<keyword id="KW-0443">Lipid metabolism</keyword>
<keyword id="KW-0456">Lyase</keyword>
<keyword id="KW-1185">Reference proteome</keyword>
<sequence length="290" mass="30296">MAIDPNSIGAVTEPMLFEWTDRDTLLYAIGVGAGTGDLAFTTENSHGIDQQVLPTYAVICCPAFGAAAKVGTFNPAALLHGSQGIRLHAPLPAAGKLSVVTEVADIQDKGEGKNAIVVLRGRGCDPESGSLVAETLTTLVLRGQGGFGGARGERPAAPEFPDRHPDARIDMPTREDQALIYRLSGDRNPLHSDPWFATQLAGFPKPILHGLCTYGVAGRALVAELGGGVAANITSIAARFTKPVFPGETLSTVIWRTEPGRAVFRTEVAGSDGAEARVVLDDGAVEYVAG</sequence>
<proteinExistence type="evidence at protein level"/>
<accession>I6YBZ8</accession>
<name>HTDY_MYCTU</name>
<gene>
    <name evidence="6" type="primary">htdY</name>
    <name evidence="8" type="ordered locus">Rv3389c</name>
</gene>
<feature type="chain" id="PRO_0000448720" description="3-hydroxyacyl-thioester dehydratase Y">
    <location>
        <begin position="1"/>
        <end position="290"/>
    </location>
</feature>
<feature type="domain" description="MaoC-like" evidence="1">
    <location>
        <begin position="161"/>
        <end position="271"/>
    </location>
</feature>
<feature type="region of interest" description="Disordered" evidence="2">
    <location>
        <begin position="147"/>
        <end position="169"/>
    </location>
</feature>
<feature type="compositionally biased region" description="Basic and acidic residues" evidence="2">
    <location>
        <begin position="151"/>
        <end position="169"/>
    </location>
</feature>
<feature type="strand" evidence="10">
    <location>
        <begin position="15"/>
        <end position="19"/>
    </location>
</feature>
<feature type="helix" evidence="10">
    <location>
        <begin position="21"/>
        <end position="30"/>
    </location>
</feature>
<feature type="helix" evidence="10">
    <location>
        <begin position="38"/>
        <end position="41"/>
    </location>
</feature>
<feature type="strand" evidence="10">
    <location>
        <begin position="43"/>
        <end position="45"/>
    </location>
</feature>
<feature type="helix" evidence="10">
    <location>
        <begin position="54"/>
        <end position="56"/>
    </location>
</feature>
<feature type="helix" evidence="10">
    <location>
        <begin position="57"/>
        <end position="60"/>
    </location>
</feature>
<feature type="helix" evidence="10">
    <location>
        <begin position="64"/>
        <end position="69"/>
    </location>
</feature>
<feature type="strand" evidence="10">
    <location>
        <begin position="71"/>
        <end position="73"/>
    </location>
</feature>
<feature type="strand" evidence="10">
    <location>
        <begin position="82"/>
        <end position="89"/>
    </location>
</feature>
<feature type="strand" evidence="10">
    <location>
        <begin position="93"/>
        <end position="108"/>
    </location>
</feature>
<feature type="strand" evidence="10">
    <location>
        <begin position="115"/>
        <end position="124"/>
    </location>
</feature>
<feature type="turn" evidence="10">
    <location>
        <begin position="126"/>
        <end position="128"/>
    </location>
</feature>
<feature type="strand" evidence="10">
    <location>
        <begin position="131"/>
        <end position="141"/>
    </location>
</feature>
<feature type="strand" evidence="10">
    <location>
        <begin position="166"/>
        <end position="171"/>
    </location>
</feature>
<feature type="helix" evidence="10">
    <location>
        <begin position="177"/>
        <end position="181"/>
    </location>
</feature>
<feature type="helix" evidence="10">
    <location>
        <begin position="182"/>
        <end position="184"/>
    </location>
</feature>
<feature type="helix" evidence="10">
    <location>
        <begin position="189"/>
        <end position="191"/>
    </location>
</feature>
<feature type="helix" evidence="10">
    <location>
        <begin position="194"/>
        <end position="199"/>
    </location>
</feature>
<feature type="helix" evidence="10">
    <location>
        <begin position="210"/>
        <end position="224"/>
    </location>
</feature>
<feature type="turn" evidence="10">
    <location>
        <begin position="225"/>
        <end position="228"/>
    </location>
</feature>
<feature type="helix" evidence="10">
    <location>
        <begin position="230"/>
        <end position="232"/>
    </location>
</feature>
<feature type="strand" evidence="10">
    <location>
        <begin position="233"/>
        <end position="240"/>
    </location>
</feature>
<feature type="strand" evidence="10">
    <location>
        <begin position="250"/>
        <end position="258"/>
    </location>
</feature>
<feature type="strand" evidence="10">
    <location>
        <begin position="261"/>
        <end position="268"/>
    </location>
</feature>
<feature type="strand" evidence="10">
    <location>
        <begin position="277"/>
        <end position="287"/>
    </location>
</feature>
<protein>
    <recommendedName>
        <fullName evidence="7">3-hydroxyacyl-thioester dehydratase Y</fullName>
        <ecNumber evidence="3 4">4.2.1.-</ecNumber>
    </recommendedName>
    <alternativeName>
        <fullName evidence="7">Enoyl-CoA hydratase 2</fullName>
        <ecNumber evidence="3 4">4.2.1.119</ecNumber>
    </alternativeName>
</protein>
<organism>
    <name type="scientific">Mycobacterium tuberculosis (strain ATCC 25618 / H37Rv)</name>
    <dbReference type="NCBI Taxonomy" id="83332"/>
    <lineage>
        <taxon>Bacteria</taxon>
        <taxon>Bacillati</taxon>
        <taxon>Actinomycetota</taxon>
        <taxon>Actinomycetes</taxon>
        <taxon>Mycobacteriales</taxon>
        <taxon>Mycobacteriaceae</taxon>
        <taxon>Mycobacterium</taxon>
        <taxon>Mycobacterium tuberculosis complex</taxon>
    </lineage>
</organism>
<dbReference type="EC" id="4.2.1.-" evidence="3 4"/>
<dbReference type="EC" id="4.2.1.119" evidence="3 4"/>
<dbReference type="EMBL" id="AL123456">
    <property type="protein sequence ID" value="CCP46210.1"/>
    <property type="molecule type" value="Genomic_DNA"/>
</dbReference>
<dbReference type="RefSeq" id="NP_217906.1">
    <property type="nucleotide sequence ID" value="NC_000962.3"/>
</dbReference>
<dbReference type="RefSeq" id="WP_003417929.1">
    <property type="nucleotide sequence ID" value="NZ_NVQJ01000027.1"/>
</dbReference>
<dbReference type="PDB" id="3KHP">
    <property type="method" value="X-ray"/>
    <property type="resolution" value="2.30 A"/>
    <property type="chains" value="A/B/C/D=1-290"/>
</dbReference>
<dbReference type="PDBsum" id="3KHP"/>
<dbReference type="SMR" id="I6YBZ8"/>
<dbReference type="FunCoup" id="I6YBZ8">
    <property type="interactions" value="8"/>
</dbReference>
<dbReference type="STRING" id="83332.Rv3389c"/>
<dbReference type="SwissLipids" id="SLP:000001166"/>
<dbReference type="PaxDb" id="83332-Rv3389c"/>
<dbReference type="DNASU" id="887923"/>
<dbReference type="GeneID" id="887923"/>
<dbReference type="KEGG" id="mtu:Rv3389c"/>
<dbReference type="KEGG" id="mtv:RVBD_3389c"/>
<dbReference type="PATRIC" id="fig|83332.111.peg.3777"/>
<dbReference type="TubercuList" id="Rv3389c"/>
<dbReference type="eggNOG" id="COG2030">
    <property type="taxonomic scope" value="Bacteria"/>
</dbReference>
<dbReference type="InParanoid" id="I6YBZ8"/>
<dbReference type="OrthoDB" id="5522043at2"/>
<dbReference type="PhylomeDB" id="I6YBZ8"/>
<dbReference type="EvolutionaryTrace" id="I6YBZ8"/>
<dbReference type="Proteomes" id="UP000001584">
    <property type="component" value="Chromosome"/>
</dbReference>
<dbReference type="GO" id="GO:0044594">
    <property type="term" value="F:17-beta-hydroxysteroid dehydrogenase (NAD+) activity"/>
    <property type="evidence" value="ECO:0000318"/>
    <property type="project" value="GO_Central"/>
</dbReference>
<dbReference type="GO" id="GO:0003857">
    <property type="term" value="F:3-hydroxyacyl-CoA dehydrogenase activity"/>
    <property type="evidence" value="ECO:0000318"/>
    <property type="project" value="GO_Central"/>
</dbReference>
<dbReference type="GO" id="GO:0004300">
    <property type="term" value="F:enoyl-CoA hydratase activity"/>
    <property type="evidence" value="ECO:0000318"/>
    <property type="project" value="GO_Central"/>
</dbReference>
<dbReference type="GO" id="GO:0006635">
    <property type="term" value="P:fatty acid beta-oxidation"/>
    <property type="evidence" value="ECO:0000318"/>
    <property type="project" value="GO_Central"/>
</dbReference>
<dbReference type="CDD" id="cd03448">
    <property type="entry name" value="HDE_HSD"/>
    <property type="match status" value="1"/>
</dbReference>
<dbReference type="FunFam" id="3.10.129.10:FF:000101">
    <property type="entry name" value="3-hydroxyacyl-thioester dehydratase HtdY"/>
    <property type="match status" value="1"/>
</dbReference>
<dbReference type="Gene3D" id="3.10.129.10">
    <property type="entry name" value="Hotdog Thioesterase"/>
    <property type="match status" value="2"/>
</dbReference>
<dbReference type="InterPro" id="IPR029069">
    <property type="entry name" value="HotDog_dom_sf"/>
</dbReference>
<dbReference type="InterPro" id="IPR002539">
    <property type="entry name" value="MaoC-like_dom"/>
</dbReference>
<dbReference type="InterPro" id="IPR054357">
    <property type="entry name" value="MFE-2_N"/>
</dbReference>
<dbReference type="PANTHER" id="PTHR13078:SF56">
    <property type="entry name" value="PEROXISOMAL MULTIFUNCTIONAL ENZYME TYPE 2"/>
    <property type="match status" value="1"/>
</dbReference>
<dbReference type="PANTHER" id="PTHR13078">
    <property type="entry name" value="PEROXISOMAL MULTIFUNCTIONAL ENZYME TYPE 2-RELATED"/>
    <property type="match status" value="1"/>
</dbReference>
<dbReference type="Pfam" id="PF01575">
    <property type="entry name" value="MaoC_dehydratas"/>
    <property type="match status" value="1"/>
</dbReference>
<dbReference type="Pfam" id="PF22622">
    <property type="entry name" value="MFE-2_hydrat-2_N"/>
    <property type="match status" value="1"/>
</dbReference>
<dbReference type="SUPFAM" id="SSF54637">
    <property type="entry name" value="Thioesterase/thiol ester dehydrase-isomerase"/>
    <property type="match status" value="2"/>
</dbReference>
<comment type="function">
    <text evidence="3 4 5">Shows trans-enoyl-CoA hydratase/3-hydroxyacyl-CoA dehydratase activity (PubMed:17240207). In vitro, can hydrate various enoyl-CoA such as (2E)-hexenoyl-CoA, (2E)-octenoyl-CoA, (2E)-decenoyl-CoA, (2E)-dodecenoyl-CoA and (2E)-hexadecenoyl-CoA (PubMed:17240207, PubMed:19136596). May contribute to the persistence of the tuberculosis infection by inducing COX-2 expression in macrophages through MAPK-NF-kappaB signaling pathway (PubMed:24907510).</text>
</comment>
<comment type="catalytic activity">
    <reaction evidence="3 4">
        <text>a (3R)-3-hydroxyacyl-CoA = a (2E)-enoyl-CoA + H2O</text>
        <dbReference type="Rhea" id="RHEA:26526"/>
        <dbReference type="ChEBI" id="CHEBI:15377"/>
        <dbReference type="ChEBI" id="CHEBI:57319"/>
        <dbReference type="ChEBI" id="CHEBI:58856"/>
        <dbReference type="EC" id="4.2.1.119"/>
    </reaction>
</comment>
<comment type="catalytic activity">
    <reaction evidence="4">
        <text>(3R)-hydroxyhexanoyl-CoA = (2E)-hexenoyl-CoA + H2O</text>
        <dbReference type="Rhea" id="RHEA:46720"/>
        <dbReference type="ChEBI" id="CHEBI:15377"/>
        <dbReference type="ChEBI" id="CHEBI:62077"/>
        <dbReference type="ChEBI" id="CHEBI:74280"/>
    </reaction>
</comment>
<comment type="catalytic activity">
    <reaction evidence="3">
        <text>(2E)-octenoyl-CoA + H2O = (3R)-hydroxyoctanoyl-CoA</text>
        <dbReference type="Rhea" id="RHEA:40187"/>
        <dbReference type="ChEBI" id="CHEBI:15377"/>
        <dbReference type="ChEBI" id="CHEBI:62242"/>
        <dbReference type="ChEBI" id="CHEBI:74279"/>
    </reaction>
</comment>
<comment type="catalytic activity">
    <reaction evidence="3 4">
        <text>(3R)-3-hydroxydecanoyl-CoA = (2E)-decenoyl-CoA + H2O</text>
        <dbReference type="Rhea" id="RHEA:45992"/>
        <dbReference type="ChEBI" id="CHEBI:15377"/>
        <dbReference type="ChEBI" id="CHEBI:61406"/>
        <dbReference type="ChEBI" id="CHEBI:74272"/>
    </reaction>
</comment>
<comment type="catalytic activity">
    <reaction evidence="3">
        <text>(3R)-3-hydroxydodecanoyl-CoA = (2E)-dodecenoyl-CoA + H2O</text>
        <dbReference type="Rhea" id="RHEA:44024"/>
        <dbReference type="ChEBI" id="CHEBI:15377"/>
        <dbReference type="ChEBI" id="CHEBI:57330"/>
        <dbReference type="ChEBI" id="CHEBI:74276"/>
    </reaction>
</comment>
<comment type="catalytic activity">
    <reaction evidence="3">
        <text>(3R)-hydroxyhexadecanoyl-CoA = (2E)-hexadecenoyl-CoA + H2O</text>
        <dbReference type="Rhea" id="RHEA:39159"/>
        <dbReference type="ChEBI" id="CHEBI:15377"/>
        <dbReference type="ChEBI" id="CHEBI:61526"/>
        <dbReference type="ChEBI" id="CHEBI:74278"/>
    </reaction>
</comment>
<comment type="biophysicochemical properties">
    <kinetics>
        <KM evidence="3">1.6 uM for dodecenoyl-CoA</KM>
        <text evidence="3">kcat is 45 sec(-1) with dodecenoyl-CoA as substrate.</text>
    </kinetics>
</comment>
<comment type="similarity">
    <text evidence="7">Belongs to the enoyl-CoA hydratase/isomerase family.</text>
</comment>